<sequence length="390" mass="44185">MPPSGLRLLPLLLPLLRLLVLTPGRPAAGLSTCKTIDMELVKRKRIEAIRGQILSKLRLSSPPSQGEVPPVPLPEAVLALYNSTRDRVAGESAEPEPEPEADYYAKEVTRVLMVENTNKIYEKVKKSPHSIYMLFNTSELREAVPEPVLLSRAELRLLRLKLKAEQHVELYQKYSNDSWRYLSNRLLAPSDTPEWLSFDVTGVVRQWLSHGGEVEGFRLSAHCSCDSKDNTLQVDINGFSSSRRGDLATIHGMNRPFLLLMATPLERAQHLHSSRQRRALDTNYCFSSTEKNCCVRQLYIDFRKDLGWKWIHEPKGYHANFCLGPCPYIWSLDTQYSKVLALYNQHNPGASAAPCCVPQALEPLPIVYYVGRKPKVEQLSNMIVRSCKCS</sequence>
<accession>P54831</accession>
<proteinExistence type="evidence at transcript level"/>
<evidence type="ECO:0000250" key="1">
    <source>
        <dbReference type="UniProtKB" id="P01137"/>
    </source>
</evidence>
<evidence type="ECO:0000250" key="2">
    <source>
        <dbReference type="UniProtKB" id="P04202"/>
    </source>
</evidence>
<evidence type="ECO:0000250" key="3">
    <source>
        <dbReference type="UniProtKB" id="P07200"/>
    </source>
</evidence>
<evidence type="ECO:0000255" key="4"/>
<evidence type="ECO:0000305" key="5"/>
<feature type="signal peptide" evidence="1">
    <location>
        <begin position="1"/>
        <end position="29"/>
    </location>
</feature>
<feature type="chain" id="PRO_0000033756" description="Latency-associated peptide" evidence="1">
    <location>
        <begin position="30"/>
        <end position="278"/>
    </location>
</feature>
<feature type="chain" id="PRO_0000033757" description="Transforming growth factor beta-1" evidence="1">
    <location>
        <begin position="279"/>
        <end position="390"/>
    </location>
</feature>
<feature type="region of interest" description="Straightjacket domain" evidence="3">
    <location>
        <begin position="30"/>
        <end position="74"/>
    </location>
</feature>
<feature type="region of interest" description="Arm domain" evidence="3">
    <location>
        <begin position="75"/>
        <end position="271"/>
    </location>
</feature>
<feature type="region of interest" description="Bowtie tail" evidence="1">
    <location>
        <begin position="226"/>
        <end position="252"/>
    </location>
</feature>
<feature type="short sequence motif" description="Cell attachment site" evidence="4">
    <location>
        <begin position="244"/>
        <end position="246"/>
    </location>
</feature>
<feature type="site" description="Cleavage; by FURIN" evidence="1">
    <location>
        <begin position="278"/>
        <end position="279"/>
    </location>
</feature>
<feature type="glycosylation site" description="N-linked (GlcNAc...) asparagine" evidence="1">
    <location>
        <position position="82"/>
    </location>
</feature>
<feature type="glycosylation site" description="N-linked (GlcNAc...) asparagine" evidence="1">
    <location>
        <position position="136"/>
    </location>
</feature>
<feature type="glycosylation site" description="N-linked (GlcNAc...) asparagine" evidence="1">
    <location>
        <position position="176"/>
    </location>
</feature>
<feature type="disulfide bond" description="Interchain (with C-1359 or C-1384 in LTBP1); in inactive form" evidence="3">
    <location>
        <position position="33"/>
    </location>
</feature>
<feature type="disulfide bond" description="Interchain (with C-225)" evidence="1">
    <location>
        <position position="223"/>
    </location>
</feature>
<feature type="disulfide bond" description="Interchain (with C-223)" evidence="1">
    <location>
        <position position="225"/>
    </location>
</feature>
<feature type="disulfide bond" evidence="1">
    <location>
        <begin position="285"/>
        <end position="294"/>
    </location>
</feature>
<feature type="disulfide bond" evidence="1">
    <location>
        <begin position="293"/>
        <end position="356"/>
    </location>
</feature>
<feature type="disulfide bond" evidence="1">
    <location>
        <begin position="322"/>
        <end position="387"/>
    </location>
</feature>
<feature type="disulfide bond" evidence="1">
    <location>
        <begin position="326"/>
        <end position="389"/>
    </location>
</feature>
<feature type="disulfide bond" description="Interchain" evidence="1">
    <location>
        <position position="355"/>
    </location>
</feature>
<organism>
    <name type="scientific">Canis lupus familiaris</name>
    <name type="common">Dog</name>
    <name type="synonym">Canis familiaris</name>
    <dbReference type="NCBI Taxonomy" id="9615"/>
    <lineage>
        <taxon>Eukaryota</taxon>
        <taxon>Metazoa</taxon>
        <taxon>Chordata</taxon>
        <taxon>Craniata</taxon>
        <taxon>Vertebrata</taxon>
        <taxon>Euteleostomi</taxon>
        <taxon>Mammalia</taxon>
        <taxon>Eutheria</taxon>
        <taxon>Laurasiatheria</taxon>
        <taxon>Carnivora</taxon>
        <taxon>Caniformia</taxon>
        <taxon>Canidae</taxon>
        <taxon>Canis</taxon>
    </lineage>
</organism>
<name>TGFB1_CANLF</name>
<keyword id="KW-0165">Cleavage on pair of basic residues</keyword>
<keyword id="KW-1015">Disulfide bond</keyword>
<keyword id="KW-0272">Extracellular matrix</keyword>
<keyword id="KW-0325">Glycoprotein</keyword>
<keyword id="KW-0339">Growth factor</keyword>
<keyword id="KW-0497">Mitogen</keyword>
<keyword id="KW-1185">Reference proteome</keyword>
<keyword id="KW-0964">Secreted</keyword>
<keyword id="KW-0732">Signal</keyword>
<reference key="1">
    <citation type="journal article" date="1995" name="Gene">
        <title>Cloning of a canine cDNA homologous to the human transforming growth factor-beta 1-encoding gene.</title>
        <authorList>
            <person name="Manning A.M."/>
            <person name="Auchampach J.A."/>
            <person name="Drong R.F."/>
            <person name="Slightom J.L."/>
        </authorList>
    </citation>
    <scope>NUCLEOTIDE SEQUENCE [MRNA]</scope>
    <source>
        <tissue>Jugular vein endothelial cell</tissue>
    </source>
</reference>
<comment type="function">
    <text evidence="1">Transforming growth factor beta-1 proprotein: Precursor of the Latency-associated peptide (LAP) and Transforming growth factor beta-1 (TGF-beta-1) chains, which constitute the regulatory and active subunit of TGF-beta-1, respectively.</text>
</comment>
<comment type="function">
    <molecule>Latency-associated peptide</molecule>
    <text evidence="1">Required to maintain the Transforming growth factor beta-1 (TGF-beta-1) chain in a latent state during storage in extracellular matrix. Associates non-covalently with TGF-beta-1 and regulates its activation via interaction with 'milieu molecules', such as LTBP1, LRRC32/GARP and LRRC33/NRROS, that control activation of TGF-beta-1. Interaction with LRRC33/NRROS regulates activation of TGF-beta-1 in macrophages and microglia. Interaction with LRRC32/GARP controls activation of TGF-beta-1 on the surface of activated regulatory T-cells (Tregs). Interaction with integrins (ITGAV:ITGB6 or ITGAV:ITGB8) results in distortion of the Latency-associated peptide chain and subsequent release of the active TGF-beta-1.</text>
</comment>
<comment type="function">
    <molecule>Transforming growth factor beta-1</molecule>
    <text evidence="1 2">Multifunctional protein that regulates the growth and differentiation of various cell types and is involved in various processes, such as normal development, immune function, microglia function and responses to neurodegeneration (By similarity). Activation into mature form follows different steps: following cleavage of the proprotein in the Golgi apparatus, Latency-associated peptide (LAP) and Transforming growth factor beta-1 (TGF-beta-1) chains remain non-covalently linked rendering TGF-beta-1 inactive during storage in extracellular matrix. At the same time, LAP chain interacts with 'milieu molecules', such as LTBP1, LRRC32/GARP and LRRC33/NRROS that control activation of TGF-beta-1 and maintain it in a latent state during storage in extracellular milieus. TGF-beta-1 is released from LAP by integrins (ITGAV:ITGB6 or ITGAV:ITGB8): integrin-binding to LAP stabilizes an alternative conformation of the LAP bowtie tail and results in distortion of the LAP chain and subsequent release of the active TGF-beta-1. Once activated following release of LAP, TGF-beta-1 acts by binding to TGF-beta receptors (TGFBR1 and TGFBR2), which transduce signal (By similarity). While expressed by many cells types, TGF-beta-1 only has a very localized range of action within cell environment thanks to fine regulation of its activation by Latency-associated peptide chain (LAP) and 'milieu molecules'. Plays an important role in bone remodeling: acts as a potent stimulator of osteoblastic bone formation, causing chemotaxis, proliferation and differentiation in committed osteoblasts. Can promote either T-helper 17 cells (Th17) or regulatory T-cells (Treg) lineage differentiation in a concentration-dependent manner. At high concentrations, leads to FOXP3-mediated suppression of RORC and down-regulation of IL-17 expression, favoring Treg cell development. At low concentrations in concert with IL-6 and IL-21, leads to expression of the IL-17 and IL-23 receptors, favoring differentiation to Th17 cells (By similarity). Stimulates sustained production of collagen through the activation of CREB3L1 by regulated intramembrane proteolysis (RIP). Mediates SMAD2/3 activation by inducing its phosphorylation and subsequent translocation to the nucleus. Positively regulates odontoblastic differentiation in dental papilla cells, via promotion of IPO7-mediated translocation of phosphorylated SMAD2 to the nucleus and subsequent transcription of target genes (By similarity). Can induce epithelial-to-mesenchymal transition (EMT) and cell migration in various cell types (By similarity).</text>
</comment>
<comment type="subunit">
    <text evidence="1 2">Homodimer; disulfide-linked. Interacts with the serine proteases, HTRA1 and HTRA3: the interaction with either inhibits TGFB1-mediated signaling and the HTRA protease activity is required for this inhibition. May interact with THSD4; this interaction may lead to sequestration by FBN1 microfibril assembly and attenuation of TGFB signaling. Interacts with CD109, DPT and ASPN. Interacts with EFEMP2. Interacts with TSKU; the interaction contributes to regulation of the hair cycle. Interacts with TGFBR3 (By similarity).</text>
</comment>
<comment type="subunit">
    <molecule>Latency-associated peptide</molecule>
    <text evidence="1 2">Homodimer; disulfide-linked. Interacts with transforming growth factor beta-1 (TGF-beta-1) chain; interaction is non-covalent and maintains TGF-beta-1 in a latent state; each latency-associated peptide (LAP) monomer interacts with TGF-beta-1 in the other monomer. Interacts with LTBP1; leading to regulation of TGF-beta-1 activation. Interacts with LRRC32/GARP; leading to regulation of TGF-beta-1 activation on the surface of activated regulatory T-cells (Tregs). Interacts with LRRC33/NRROS; leading to regulation of TGF-beta-1 activation in macrophages and microglia. Interacts (via cell attachment site) with integrins ITGAV and ITGB6 (ITGAV:ITGB6), leading to release of the active TGF-beta-1. Interacts with NREP; the interaction results in a decrease in TGFB1 autoinduction. Interacts with HSP90AB1; inhibits latent TGFB1 activation.</text>
</comment>
<comment type="subunit">
    <molecule>Transforming growth factor beta-1</molecule>
    <text evidence="1">Homodimer; disulfide-linked. Interacts with TGF-beta receptors (TGFBR1 and TGFBR2), leading to signal transduction.</text>
</comment>
<comment type="subcellular location">
    <molecule>Latency-associated peptide</molecule>
    <subcellularLocation>
        <location evidence="1">Secreted</location>
        <location evidence="1">Extracellular space</location>
        <location evidence="1">Extracellular matrix</location>
    </subcellularLocation>
</comment>
<comment type="subcellular location">
    <molecule>Transforming growth factor beta-1</molecule>
    <subcellularLocation>
        <location evidence="1">Secreted</location>
    </subcellularLocation>
</comment>
<comment type="domain">
    <molecule>Latency-associated peptide</molecule>
    <text evidence="3">The 'straitjacket' and 'arm' domains encircle the Transforming growth factor beta-1 (TGF-beta-1) monomers and are fastened together by strong bonding between Lys-56 and Tyr-103/Tyr-104.</text>
</comment>
<comment type="domain">
    <molecule>Latency-associated peptide</molecule>
    <text evidence="1">The cell attachment site motif mediates binding to integrins (ITGAV:ITGB6 or ITGAV:ITGB8). The motif locates to a long loop in the arm domain called the bowtie tail. Integrin-binding stabilizes an alternative conformation of the bowtie tail. Activation by integrin requires force application by the actin cytoskeleton, which is resisted by the 'milieu molecules' (such as LTBP1, LRRC32/GARP and/or LRRC33/NRROS), resulting in distortion of the prodomain and release of the active TGF-beta-1.</text>
</comment>
<comment type="PTM">
    <text evidence="1">Transforming growth factor beta-1 proprotein: The precursor proprotein is cleaved in the Golgi apparatus by FURIN to form Transforming growth factor beta-1 (TGF-beta-1) and Latency-associated peptide (LAP) chains, which remain non-covalently linked, rendering TGF-beta-1 inactive.</text>
</comment>
<comment type="PTM">
    <molecule>Latency-associated peptide</molecule>
    <text evidence="1">N-glycosylated. Deglycosylation leads to activation of Transforming growth factor beta-1 (TGF-beta-1); mechanisms triggering deglycosylation-driven activation of TGF-beta-1 are however unclear.</text>
</comment>
<comment type="similarity">
    <text evidence="5">Belongs to the TGF-beta family.</text>
</comment>
<protein>
    <recommendedName>
        <fullName>Transforming growth factor beta-1 proprotein</fullName>
    </recommendedName>
    <component>
        <recommendedName>
            <fullName>Latency-associated peptide</fullName>
            <shortName>LAP</shortName>
        </recommendedName>
    </component>
    <component>
        <recommendedName>
            <fullName>Transforming growth factor beta-1</fullName>
            <shortName>TGF-beta-1</shortName>
        </recommendedName>
    </component>
</protein>
<gene>
    <name type="primary">TGFB1</name>
</gene>
<dbReference type="EMBL" id="L34956">
    <property type="protein sequence ID" value="AAA51458.1"/>
    <property type="molecule type" value="mRNA"/>
</dbReference>
<dbReference type="PIR" id="JC4023">
    <property type="entry name" value="JC4023"/>
</dbReference>
<dbReference type="RefSeq" id="NP_001003309.1">
    <property type="nucleotide sequence ID" value="NM_001003309.1"/>
</dbReference>
<dbReference type="SMR" id="P54831"/>
<dbReference type="FunCoup" id="P54831">
    <property type="interactions" value="349"/>
</dbReference>
<dbReference type="STRING" id="9615.ENSCAFP00000007462"/>
<dbReference type="GlyCosmos" id="P54831">
    <property type="glycosylation" value="3 sites, No reported glycans"/>
</dbReference>
<dbReference type="PaxDb" id="9615-ENSCAFP00000007462"/>
<dbReference type="InParanoid" id="P54831"/>
<dbReference type="OrthoDB" id="8863549at2759"/>
<dbReference type="Proteomes" id="UP000002254">
    <property type="component" value="Unplaced"/>
</dbReference>
<dbReference type="Proteomes" id="UP000694429">
    <property type="component" value="Unplaced"/>
</dbReference>
<dbReference type="Proteomes" id="UP000694542">
    <property type="component" value="Unplaced"/>
</dbReference>
<dbReference type="Proteomes" id="UP000805418">
    <property type="component" value="Unplaced"/>
</dbReference>
<dbReference type="GO" id="GO:0072562">
    <property type="term" value="C:blood microparticle"/>
    <property type="evidence" value="ECO:0000250"/>
    <property type="project" value="AgBase"/>
</dbReference>
<dbReference type="GO" id="GO:0009986">
    <property type="term" value="C:cell surface"/>
    <property type="evidence" value="ECO:0000250"/>
    <property type="project" value="UniProtKB"/>
</dbReference>
<dbReference type="GO" id="GO:0005737">
    <property type="term" value="C:cytoplasm"/>
    <property type="evidence" value="ECO:0000250"/>
    <property type="project" value="UniProtKB"/>
</dbReference>
<dbReference type="GO" id="GO:0005615">
    <property type="term" value="C:extracellular space"/>
    <property type="evidence" value="ECO:0000250"/>
    <property type="project" value="UniProtKB"/>
</dbReference>
<dbReference type="GO" id="GO:0005634">
    <property type="term" value="C:nucleus"/>
    <property type="evidence" value="ECO:0000250"/>
    <property type="project" value="UniProtKB"/>
</dbReference>
<dbReference type="GO" id="GO:0005125">
    <property type="term" value="F:cytokine activity"/>
    <property type="evidence" value="ECO:0000318"/>
    <property type="project" value="GO_Central"/>
</dbReference>
<dbReference type="GO" id="GO:0008083">
    <property type="term" value="F:growth factor activity"/>
    <property type="evidence" value="ECO:0007669"/>
    <property type="project" value="UniProtKB-KW"/>
</dbReference>
<dbReference type="GO" id="GO:0034713">
    <property type="term" value="F:type I transforming growth factor beta receptor binding"/>
    <property type="evidence" value="ECO:0000250"/>
    <property type="project" value="AgBase"/>
</dbReference>
<dbReference type="GO" id="GO:0005114">
    <property type="term" value="F:type II transforming growth factor beta receptor binding"/>
    <property type="evidence" value="ECO:0000250"/>
    <property type="project" value="UniProtKB"/>
</dbReference>
<dbReference type="GO" id="GO:0034714">
    <property type="term" value="F:type III transforming growth factor beta receptor binding"/>
    <property type="evidence" value="ECO:0000250"/>
    <property type="project" value="AgBase"/>
</dbReference>
<dbReference type="GO" id="GO:0006754">
    <property type="term" value="P:ATP biosynthetic process"/>
    <property type="evidence" value="ECO:0000250"/>
    <property type="project" value="UniProtKB"/>
</dbReference>
<dbReference type="GO" id="GO:0045216">
    <property type="term" value="P:cell-cell junction organization"/>
    <property type="evidence" value="ECO:0000250"/>
    <property type="project" value="UniProtKB"/>
</dbReference>
<dbReference type="GO" id="GO:0071560">
    <property type="term" value="P:cellular response to transforming growth factor beta stimulus"/>
    <property type="evidence" value="ECO:0000250"/>
    <property type="project" value="AgBase"/>
</dbReference>
<dbReference type="GO" id="GO:0002062">
    <property type="term" value="P:chondrocyte differentiation"/>
    <property type="evidence" value="ECO:0000250"/>
    <property type="project" value="UniProtKB"/>
</dbReference>
<dbReference type="GO" id="GO:0001837">
    <property type="term" value="P:epithelial to mesenchymal transition"/>
    <property type="evidence" value="ECO:0000250"/>
    <property type="project" value="UniProtKB"/>
</dbReference>
<dbReference type="GO" id="GO:0085029">
    <property type="term" value="P:extracellular matrix assembly"/>
    <property type="evidence" value="ECO:0000250"/>
    <property type="project" value="UniProtKB"/>
</dbReference>
<dbReference type="GO" id="GO:0097191">
    <property type="term" value="P:extrinsic apoptotic signaling pathway"/>
    <property type="evidence" value="ECO:0000250"/>
    <property type="project" value="UniProtKB"/>
</dbReference>
<dbReference type="GO" id="GO:0002244">
    <property type="term" value="P:hematopoietic progenitor cell differentiation"/>
    <property type="evidence" value="ECO:0000250"/>
    <property type="project" value="UniProtKB"/>
</dbReference>
<dbReference type="GO" id="GO:0030214">
    <property type="term" value="P:hyaluronan catabolic process"/>
    <property type="evidence" value="ECO:0000250"/>
    <property type="project" value="UniProtKB"/>
</dbReference>
<dbReference type="GO" id="GO:0031293">
    <property type="term" value="P:membrane protein intracellular domain proteolysis"/>
    <property type="evidence" value="ECO:0000250"/>
    <property type="project" value="UniProtKB"/>
</dbReference>
<dbReference type="GO" id="GO:0043537">
    <property type="term" value="P:negative regulation of blood vessel endothelial cell migration"/>
    <property type="evidence" value="ECO:0000250"/>
    <property type="project" value="UniProtKB"/>
</dbReference>
<dbReference type="GO" id="GO:0045786">
    <property type="term" value="P:negative regulation of cell cycle"/>
    <property type="evidence" value="ECO:0000250"/>
    <property type="project" value="UniProtKB"/>
</dbReference>
<dbReference type="GO" id="GO:0030308">
    <property type="term" value="P:negative regulation of cell growth"/>
    <property type="evidence" value="ECO:0000250"/>
    <property type="project" value="UniProtKB"/>
</dbReference>
<dbReference type="GO" id="GO:0008285">
    <property type="term" value="P:negative regulation of cell population proliferation"/>
    <property type="evidence" value="ECO:0000250"/>
    <property type="project" value="UniProtKB"/>
</dbReference>
<dbReference type="GO" id="GO:2000048">
    <property type="term" value="P:negative regulation of cell-cell adhesion mediated by cadherin"/>
    <property type="evidence" value="ECO:0000250"/>
    <property type="project" value="UniProtKB"/>
</dbReference>
<dbReference type="GO" id="GO:0045892">
    <property type="term" value="P:negative regulation of DNA-templated transcription"/>
    <property type="evidence" value="ECO:0000250"/>
    <property type="project" value="UniProtKB"/>
</dbReference>
<dbReference type="GO" id="GO:0050680">
    <property type="term" value="P:negative regulation of epithelial cell proliferation"/>
    <property type="evidence" value="ECO:0000250"/>
    <property type="project" value="UniProtKB"/>
</dbReference>
<dbReference type="GO" id="GO:0045599">
    <property type="term" value="P:negative regulation of fat cell differentiation"/>
    <property type="evidence" value="ECO:0000250"/>
    <property type="project" value="UniProtKB"/>
</dbReference>
<dbReference type="GO" id="GO:0010629">
    <property type="term" value="P:negative regulation of gene expression"/>
    <property type="evidence" value="ECO:0000250"/>
    <property type="project" value="BHF-UCL"/>
</dbReference>
<dbReference type="GO" id="GO:1900126">
    <property type="term" value="P:negative regulation of hyaluronan biosynthetic process"/>
    <property type="evidence" value="ECO:0000250"/>
    <property type="project" value="UniProtKB"/>
</dbReference>
<dbReference type="GO" id="GO:0010936">
    <property type="term" value="P:negative regulation of macrophage cytokine production"/>
    <property type="evidence" value="ECO:0000250"/>
    <property type="project" value="AgBase"/>
</dbReference>
<dbReference type="GO" id="GO:0045662">
    <property type="term" value="P:negative regulation of myoblast differentiation"/>
    <property type="evidence" value="ECO:0000250"/>
    <property type="project" value="UniProtKB"/>
</dbReference>
<dbReference type="GO" id="GO:0048642">
    <property type="term" value="P:negative regulation of skeletal muscle tissue development"/>
    <property type="evidence" value="ECO:0000250"/>
    <property type="project" value="UniProtKB"/>
</dbReference>
<dbReference type="GO" id="GO:0071895">
    <property type="term" value="P:odontoblast differentiation"/>
    <property type="evidence" value="ECO:0000250"/>
    <property type="project" value="UniProtKB"/>
</dbReference>
<dbReference type="GO" id="GO:0006796">
    <property type="term" value="P:phosphate-containing compound metabolic process"/>
    <property type="evidence" value="ECO:0000250"/>
    <property type="project" value="UniProtKB"/>
</dbReference>
<dbReference type="GO" id="GO:0043536">
    <property type="term" value="P:positive regulation of blood vessel endothelial cell migration"/>
    <property type="evidence" value="ECO:0000250"/>
    <property type="project" value="UniProtKB"/>
</dbReference>
<dbReference type="GO" id="GO:0051781">
    <property type="term" value="P:positive regulation of cell division"/>
    <property type="evidence" value="ECO:0007669"/>
    <property type="project" value="UniProtKB-KW"/>
</dbReference>
<dbReference type="GO" id="GO:0030335">
    <property type="term" value="P:positive regulation of cell migration"/>
    <property type="evidence" value="ECO:0000250"/>
    <property type="project" value="UniProtKB"/>
</dbReference>
<dbReference type="GO" id="GO:0008284">
    <property type="term" value="P:positive regulation of cell population proliferation"/>
    <property type="evidence" value="ECO:0000250"/>
    <property type="project" value="UniProtKB"/>
</dbReference>
<dbReference type="GO" id="GO:0050921">
    <property type="term" value="P:positive regulation of chemotaxis"/>
    <property type="evidence" value="ECO:0000250"/>
    <property type="project" value="UniProtKB"/>
</dbReference>
<dbReference type="GO" id="GO:0032967">
    <property type="term" value="P:positive regulation of collagen biosynthetic process"/>
    <property type="evidence" value="ECO:0000250"/>
    <property type="project" value="UniProtKB"/>
</dbReference>
<dbReference type="GO" id="GO:0045742">
    <property type="term" value="P:positive regulation of epidermal growth factor receptor signaling pathway"/>
    <property type="evidence" value="ECO:0000250"/>
    <property type="project" value="UniProtKB"/>
</dbReference>
<dbReference type="GO" id="GO:0010718">
    <property type="term" value="P:positive regulation of epithelial to mesenchymal transition"/>
    <property type="evidence" value="ECO:0000250"/>
    <property type="project" value="UniProtKB"/>
</dbReference>
<dbReference type="GO" id="GO:0070374">
    <property type="term" value="P:positive regulation of ERK1 and ERK2 cascade"/>
    <property type="evidence" value="ECO:0000250"/>
    <property type="project" value="UniProtKB"/>
</dbReference>
<dbReference type="GO" id="GO:0010763">
    <property type="term" value="P:positive regulation of fibroblast migration"/>
    <property type="evidence" value="ECO:0000250"/>
    <property type="project" value="UniProtKB"/>
</dbReference>
<dbReference type="GO" id="GO:0010628">
    <property type="term" value="P:positive regulation of gene expression"/>
    <property type="evidence" value="ECO:0000250"/>
    <property type="project" value="UniProtKB"/>
</dbReference>
<dbReference type="GO" id="GO:0032740">
    <property type="term" value="P:positive regulation of interleukin-17 production"/>
    <property type="evidence" value="ECO:0000250"/>
    <property type="project" value="UniProtKB"/>
</dbReference>
<dbReference type="GO" id="GO:0048298">
    <property type="term" value="P:positive regulation of isotype switching to IgA isotypes"/>
    <property type="evidence" value="ECO:0000250"/>
    <property type="project" value="AgBase"/>
</dbReference>
<dbReference type="GO" id="GO:0014008">
    <property type="term" value="P:positive regulation of microglia differentiation"/>
    <property type="evidence" value="ECO:0000250"/>
    <property type="project" value="UniProtKB"/>
</dbReference>
<dbReference type="GO" id="GO:0042307">
    <property type="term" value="P:positive regulation of protein import into nucleus"/>
    <property type="evidence" value="ECO:0000250"/>
    <property type="project" value="AgBase"/>
</dbReference>
<dbReference type="GO" id="GO:0051247">
    <property type="term" value="P:positive regulation of protein metabolic process"/>
    <property type="evidence" value="ECO:0000250"/>
    <property type="project" value="UniProtKB"/>
</dbReference>
<dbReference type="GO" id="GO:0050714">
    <property type="term" value="P:positive regulation of protein secretion"/>
    <property type="evidence" value="ECO:0000250"/>
    <property type="project" value="UniProtKB"/>
</dbReference>
<dbReference type="GO" id="GO:0031334">
    <property type="term" value="P:positive regulation of protein-containing complex assembly"/>
    <property type="evidence" value="ECO:0000250"/>
    <property type="project" value="UniProtKB"/>
</dbReference>
<dbReference type="GO" id="GO:0060391">
    <property type="term" value="P:positive regulation of SMAD protein signal transduction"/>
    <property type="evidence" value="ECO:0000250"/>
    <property type="project" value="UniProtKB"/>
</dbReference>
<dbReference type="GO" id="GO:0032930">
    <property type="term" value="P:positive regulation of superoxide anion generation"/>
    <property type="evidence" value="ECO:0000250"/>
    <property type="project" value="UniProtKB"/>
</dbReference>
<dbReference type="GO" id="GO:0045944">
    <property type="term" value="P:positive regulation of transcription by RNA polymerase II"/>
    <property type="evidence" value="ECO:0000250"/>
    <property type="project" value="AgBase"/>
</dbReference>
<dbReference type="GO" id="GO:0032801">
    <property type="term" value="P:receptor catabolic process"/>
    <property type="evidence" value="ECO:0000250"/>
    <property type="project" value="UniProtKB"/>
</dbReference>
<dbReference type="GO" id="GO:0042127">
    <property type="term" value="P:regulation of cell population proliferation"/>
    <property type="evidence" value="ECO:0000318"/>
    <property type="project" value="GO_Central"/>
</dbReference>
<dbReference type="GO" id="GO:0070723">
    <property type="term" value="P:response to cholesterol"/>
    <property type="evidence" value="ECO:0000250"/>
    <property type="project" value="UniProtKB"/>
</dbReference>
<dbReference type="GO" id="GO:0032355">
    <property type="term" value="P:response to estradiol"/>
    <property type="evidence" value="ECO:0000250"/>
    <property type="project" value="UniProtKB"/>
</dbReference>
<dbReference type="GO" id="GO:0032570">
    <property type="term" value="P:response to progesterone"/>
    <property type="evidence" value="ECO:0000250"/>
    <property type="project" value="UniProtKB"/>
</dbReference>
<dbReference type="GO" id="GO:0009611">
    <property type="term" value="P:response to wounding"/>
    <property type="evidence" value="ECO:0000250"/>
    <property type="project" value="AgBase"/>
</dbReference>
<dbReference type="GO" id="GO:0007435">
    <property type="term" value="P:salivary gland morphogenesis"/>
    <property type="evidence" value="ECO:0000250"/>
    <property type="project" value="AgBase"/>
</dbReference>
<dbReference type="GO" id="GO:0007179">
    <property type="term" value="P:transforming growth factor beta receptor signaling pathway"/>
    <property type="evidence" value="ECO:0000250"/>
    <property type="project" value="UniProtKB"/>
</dbReference>
<dbReference type="CDD" id="cd19384">
    <property type="entry name" value="TGF_beta_TGFB1"/>
    <property type="match status" value="1"/>
</dbReference>
<dbReference type="FunFam" id="2.10.90.10:FF:000004">
    <property type="entry name" value="Transforming growth factor beta"/>
    <property type="match status" value="1"/>
</dbReference>
<dbReference type="FunFam" id="2.60.120.970:FF:000010">
    <property type="entry name" value="Transforming growth factor beta"/>
    <property type="match status" value="1"/>
</dbReference>
<dbReference type="Gene3D" id="2.60.120.970">
    <property type="match status" value="1"/>
</dbReference>
<dbReference type="Gene3D" id="2.10.90.10">
    <property type="entry name" value="Cystine-knot cytokines"/>
    <property type="match status" value="1"/>
</dbReference>
<dbReference type="InterPro" id="IPR029034">
    <property type="entry name" value="Cystine-knot_cytokine"/>
</dbReference>
<dbReference type="InterPro" id="IPR001839">
    <property type="entry name" value="TGF-b_C"/>
</dbReference>
<dbReference type="InterPro" id="IPR001111">
    <property type="entry name" value="TGF-b_propeptide"/>
</dbReference>
<dbReference type="InterPro" id="IPR016319">
    <property type="entry name" value="TGF-beta"/>
</dbReference>
<dbReference type="InterPro" id="IPR015615">
    <property type="entry name" value="TGF-beta-rel"/>
</dbReference>
<dbReference type="InterPro" id="IPR003939">
    <property type="entry name" value="TGFb1"/>
</dbReference>
<dbReference type="InterPro" id="IPR017948">
    <property type="entry name" value="TGFb_CS"/>
</dbReference>
<dbReference type="PANTHER" id="PTHR11848">
    <property type="entry name" value="TGF-BETA FAMILY"/>
    <property type="match status" value="1"/>
</dbReference>
<dbReference type="PANTHER" id="PTHR11848:SF125">
    <property type="entry name" value="TRANSFORMING GROWTH FACTOR BETA-1 PROPROTEIN"/>
    <property type="match status" value="1"/>
</dbReference>
<dbReference type="Pfam" id="PF00019">
    <property type="entry name" value="TGF_beta"/>
    <property type="match status" value="1"/>
</dbReference>
<dbReference type="Pfam" id="PF00688">
    <property type="entry name" value="TGFb_propeptide"/>
    <property type="match status" value="1"/>
</dbReference>
<dbReference type="PIRSF" id="PIRSF001787">
    <property type="entry name" value="TGF-beta"/>
    <property type="match status" value="1"/>
</dbReference>
<dbReference type="PRINTS" id="PR01423">
    <property type="entry name" value="TGFBETA"/>
</dbReference>
<dbReference type="PRINTS" id="PR01424">
    <property type="entry name" value="TGFBETA1"/>
</dbReference>
<dbReference type="SMART" id="SM00204">
    <property type="entry name" value="TGFB"/>
    <property type="match status" value="1"/>
</dbReference>
<dbReference type="SUPFAM" id="SSF57501">
    <property type="entry name" value="Cystine-knot cytokines"/>
    <property type="match status" value="1"/>
</dbReference>
<dbReference type="PROSITE" id="PS00250">
    <property type="entry name" value="TGF_BETA_1"/>
    <property type="match status" value="1"/>
</dbReference>
<dbReference type="PROSITE" id="PS51362">
    <property type="entry name" value="TGF_BETA_2"/>
    <property type="match status" value="1"/>
</dbReference>